<comment type="function">
    <text evidence="2 4 5 8 9">Probable glycosyltransferase involved in the O-arabinosylation of several proteins including extensins and small signaling peptides (Probable). Catalyzes the transfer of the initial L-arabinose to the hydroxyl group of Hyp residues (Probable). Probably involved in the arabinosylation of CLE12, a signaling peptide that moves from root to shoot, to interact with SUNN receptor kinase signaling that regulates nodulation (Probable). Involved in long distance nodulation signaling events (Probable) (PubMed:21742814). Involved in the autoregulation of nodulation (AON), a long distance systemic signaling from root to shoot and back again, which allows legumes to limit the number of root nodules formed based on available nitrogen and previous rhizobial colonization (PubMed:27135324, PubMed:28592666). Functions in the root, upstream of the shoot receptor kinase SUNN and via CLE peptide, to control AON (PubMed:28592666).</text>
</comment>
<comment type="catalytic activity">
    <reaction evidence="7">
        <text>trans-4-hydroxy-L-prolyl-[protein] + UDP-beta-L-arabinofuranose = O-(beta-L-arabinofuranosyl)-trans-4-hydroxy-L-prolyl-[protein] + UDP + H(+)</text>
        <dbReference type="Rhea" id="RHEA:49472"/>
        <dbReference type="Rhea" id="RHEA-COMP:12408"/>
        <dbReference type="Rhea" id="RHEA-COMP:12409"/>
        <dbReference type="ChEBI" id="CHEBI:15378"/>
        <dbReference type="ChEBI" id="CHEBI:58223"/>
        <dbReference type="ChEBI" id="CHEBI:61463"/>
        <dbReference type="ChEBI" id="CHEBI:61965"/>
        <dbReference type="ChEBI" id="CHEBI:131610"/>
        <dbReference type="EC" id="2.4.2.58"/>
    </reaction>
    <physiologicalReaction direction="left-to-right" evidence="7">
        <dbReference type="Rhea" id="RHEA:49473"/>
    </physiologicalReaction>
</comment>
<comment type="subcellular location">
    <subcellularLocation>
        <location evidence="5">Golgi apparatus membrane</location>
        <topology evidence="1">Single-pass type II membrane protein</topology>
    </subcellularLocation>
</comment>
<comment type="tissue specificity">
    <text evidence="2 3">Expressed in the vasculature of leaves, petioles, stems and roots (PubMed:22301956). Expressed in the vascular cylinder throughout the root, and nodule vasculature (PubMed:21742814).</text>
</comment>
<comment type="disruption phenotype">
    <text evidence="2 5">Dramatic increase in root nodule number when inoculated with Sinorhizobium medicae (PubMed:21742814, PubMed:28592666). Inhibition of root growth in both the presence and absence of rhizobia (PubMed:21742814, PubMed:28592666).</text>
</comment>
<comment type="sequence caution" evidence="7">
    <conflict type="erroneous initiation">
        <sequence resource="EMBL-CDS" id="AET00211"/>
    </conflict>
    <text>Truncated N-terminus.</text>
</comment>
<feature type="chain" id="PRO_0000448631" description="Hydroxyproline O-arabinosyltransferase RDN1">
    <location>
        <begin position="1"/>
        <end position="357"/>
    </location>
</feature>
<feature type="transmembrane region" description="Helical; Signal-anchor" evidence="1">
    <location>
        <begin position="13"/>
        <end position="33"/>
    </location>
</feature>
<name>RDN1_MEDTR</name>
<sequence>MIVRKSMGRVKSLLMLLMVLGFSFATYNLVFMMMEHKAGNDLGSFDGKAMEIRNTNSKYHVAVTATDAAYSQWQCRIMYYWYKKTKDMPGSAMGKFTRILHSGRGDQLMNEIPTFVVDPLPEGLDRGYIVLNRPWAFVQWLEKAVIDEEYILMAEPDHIFVNPLPNLATENEPAGYPFFYIKPAENEKIMRKFYPKENGPVTDVDPIGNSPVIIHKYMLEEIAPTWVNISLRMKDDPETDKAFGWVLEMYAYAVASALHGIKHILRKDFMLQPPWDLDVGKKFIIHFTYGCDYNLKGKLTYGKIGEWRFDKRSYLMGPPPKNLSLPPPGVPESVVRLVKMVNEATANIPNWDSLNRS</sequence>
<proteinExistence type="evidence at transcript level"/>
<gene>
    <name evidence="6" type="primary">RDN1</name>
    <name evidence="10" type="ordered locus">MTR_5g089520</name>
    <name evidence="11" type="ORF">MtrunA17_Chr5g0441831</name>
</gene>
<reference key="1">
    <citation type="journal article" date="2011" name="Plant Physiol.">
        <title>The ROOT DETERMINED NODULATION1 gene regulates nodule number in roots of Medicago truncatula and defines a highly conserved, uncharacterized plant gene family.</title>
        <authorList>
            <person name="Schnabel E.L."/>
            <person name="Kassaw T.K."/>
            <person name="Smith L.S."/>
            <person name="Marsh J.F."/>
            <person name="Oldroyd G.E."/>
            <person name="Long S.R."/>
            <person name="Frugoli J.A."/>
        </authorList>
    </citation>
    <scope>NUCLEOTIDE SEQUENCE [MRNA]</scope>
    <scope>FUNCTION</scope>
    <scope>TISSUE SPECIFICITY</scope>
    <scope>DISRUPTION PHENOTYPE</scope>
</reference>
<reference key="2">
    <citation type="journal article" date="2011" name="Nature">
        <title>The Medicago genome provides insight into the evolution of rhizobial symbioses.</title>
        <authorList>
            <person name="Young N.D."/>
            <person name="Debelle F."/>
            <person name="Oldroyd G.E.D."/>
            <person name="Geurts R."/>
            <person name="Cannon S.B."/>
            <person name="Udvardi M.K."/>
            <person name="Benedito V.A."/>
            <person name="Mayer K.F.X."/>
            <person name="Gouzy J."/>
            <person name="Schoof H."/>
            <person name="Van de Peer Y."/>
            <person name="Proost S."/>
            <person name="Cook D.R."/>
            <person name="Meyers B.C."/>
            <person name="Spannagl M."/>
            <person name="Cheung F."/>
            <person name="De Mita S."/>
            <person name="Krishnakumar V."/>
            <person name="Gundlach H."/>
            <person name="Zhou S."/>
            <person name="Mudge J."/>
            <person name="Bharti A.K."/>
            <person name="Murray J.D."/>
            <person name="Naoumkina M.A."/>
            <person name="Rosen B."/>
            <person name="Silverstein K.A.T."/>
            <person name="Tang H."/>
            <person name="Rombauts S."/>
            <person name="Zhao P.X."/>
            <person name="Zhou P."/>
            <person name="Barbe V."/>
            <person name="Bardou P."/>
            <person name="Bechner M."/>
            <person name="Bellec A."/>
            <person name="Berger A."/>
            <person name="Berges H."/>
            <person name="Bidwell S."/>
            <person name="Bisseling T."/>
            <person name="Choisne N."/>
            <person name="Couloux A."/>
            <person name="Denny R."/>
            <person name="Deshpande S."/>
            <person name="Dai X."/>
            <person name="Doyle J.J."/>
            <person name="Dudez A.-M."/>
            <person name="Farmer A.D."/>
            <person name="Fouteau S."/>
            <person name="Franken C."/>
            <person name="Gibelin C."/>
            <person name="Gish J."/>
            <person name="Goldstein S."/>
            <person name="Gonzalez A.J."/>
            <person name="Green P.J."/>
            <person name="Hallab A."/>
            <person name="Hartog M."/>
            <person name="Hua A."/>
            <person name="Humphray S.J."/>
            <person name="Jeong D.-H."/>
            <person name="Jing Y."/>
            <person name="Jocker A."/>
            <person name="Kenton S.M."/>
            <person name="Kim D.-J."/>
            <person name="Klee K."/>
            <person name="Lai H."/>
            <person name="Lang C."/>
            <person name="Lin S."/>
            <person name="Macmil S.L."/>
            <person name="Magdelenat G."/>
            <person name="Matthews L."/>
            <person name="McCorrison J."/>
            <person name="Monaghan E.L."/>
            <person name="Mun J.-H."/>
            <person name="Najar F.Z."/>
            <person name="Nicholson C."/>
            <person name="Noirot C."/>
            <person name="O'Bleness M."/>
            <person name="Paule C.R."/>
            <person name="Poulain J."/>
            <person name="Prion F."/>
            <person name="Qin B."/>
            <person name="Qu C."/>
            <person name="Retzel E.F."/>
            <person name="Riddle C."/>
            <person name="Sallet E."/>
            <person name="Samain S."/>
            <person name="Samson N."/>
            <person name="Sanders I."/>
            <person name="Saurat O."/>
            <person name="Scarpelli C."/>
            <person name="Schiex T."/>
            <person name="Segurens B."/>
            <person name="Severin A.J."/>
            <person name="Sherrier D.J."/>
            <person name="Shi R."/>
            <person name="Sims S."/>
            <person name="Singer S.R."/>
            <person name="Sinharoy S."/>
            <person name="Sterck L."/>
            <person name="Viollet A."/>
            <person name="Wang B.-B."/>
            <person name="Wang K."/>
            <person name="Wang M."/>
            <person name="Wang X."/>
            <person name="Warfsmann J."/>
            <person name="Weissenbach J."/>
            <person name="White D.D."/>
            <person name="White J.D."/>
            <person name="Wiley G.B."/>
            <person name="Wincker P."/>
            <person name="Xing Y."/>
            <person name="Yang L."/>
            <person name="Yao Z."/>
            <person name="Ying F."/>
            <person name="Zhai J."/>
            <person name="Zhou L."/>
            <person name="Zuber A."/>
            <person name="Denarie J."/>
            <person name="Dixon R.A."/>
            <person name="May G.D."/>
            <person name="Schwartz D.C."/>
            <person name="Rogers J."/>
            <person name="Quetier F."/>
            <person name="Town C.D."/>
            <person name="Roe B.A."/>
        </authorList>
    </citation>
    <scope>NUCLEOTIDE SEQUENCE [LARGE SCALE GENOMIC DNA]</scope>
    <source>
        <strain>cv. Jemalong A17</strain>
    </source>
</reference>
<reference key="3">
    <citation type="journal article" date="2014" name="BMC Genomics">
        <title>An improved genome release (version Mt4.0) for the model legume Medicago truncatula.</title>
        <authorList>
            <person name="Tang H."/>
            <person name="Krishnakumar V."/>
            <person name="Bidwell S."/>
            <person name="Rosen B."/>
            <person name="Chan A."/>
            <person name="Zhou S."/>
            <person name="Gentzbittel L."/>
            <person name="Childs K.L."/>
            <person name="Yandell M."/>
            <person name="Gundlach H."/>
            <person name="Mayer K.F."/>
            <person name="Schwartz D.C."/>
            <person name="Town C.D."/>
        </authorList>
    </citation>
    <scope>GENOME REANNOTATION</scope>
    <source>
        <strain>cv. Jemalong A17</strain>
    </source>
</reference>
<reference key="4">
    <citation type="journal article" date="2018" name="Nat. Plants">
        <title>Whole-genome landscape of Medicago truncatula symbiotic genes.</title>
        <authorList>
            <person name="Pecrix Y."/>
            <person name="Staton S.E."/>
            <person name="Sallet E."/>
            <person name="Lelandais-Briere C."/>
            <person name="Moreau S."/>
            <person name="Carrere S."/>
            <person name="Blein T."/>
            <person name="Jardinaud M.F."/>
            <person name="Latrasse D."/>
            <person name="Zouine M."/>
            <person name="Zahm M."/>
            <person name="Kreplak J."/>
            <person name="Mayjonade B."/>
            <person name="Satge C."/>
            <person name="Perez M."/>
            <person name="Cauet S."/>
            <person name="Marande W."/>
            <person name="Chantry-Darmon C."/>
            <person name="Lopez-Roques C."/>
            <person name="Bouchez O."/>
            <person name="Berard A."/>
            <person name="Debelle F."/>
            <person name="Munos S."/>
            <person name="Bendahmane A."/>
            <person name="Berges H."/>
            <person name="Niebel A."/>
            <person name="Buitink J."/>
            <person name="Frugier F."/>
            <person name="Benhamed M."/>
            <person name="Crespi M."/>
            <person name="Gouzy J."/>
            <person name="Gamas P."/>
        </authorList>
    </citation>
    <scope>NUCLEOTIDE SEQUENCE [LARGE SCALE GENOMIC DNA]</scope>
    <source>
        <strain>cv. Jemalong A17</strain>
    </source>
</reference>
<reference key="5">
    <citation type="journal article" date="2012" name="Plant Signal. Behav.">
        <title>The M. truncatula SUNN gene is expressed in vascular tissue, similarly to RDN1, consistent with the role of these nodulation regulation genes in long distance signaling.</title>
        <authorList>
            <person name="Schnabel E."/>
            <person name="Karve A."/>
            <person name="Kassaw T."/>
            <person name="Mukherjee A."/>
            <person name="Zhou X."/>
            <person name="Hall T."/>
            <person name="Frugoli J."/>
        </authorList>
    </citation>
    <scope>FUNCTION</scope>
    <scope>TISSUE SPECIFICITY</scope>
</reference>
<reference key="6">
    <citation type="journal article" date="2015" name="Plants (Basel)">
        <title>Multiple Autoregulation of Nodulation (AON) signals identified through split root analysis of Medicago truncatula sunn and rdn1 mutants.</title>
        <authorList>
            <person name="Kassaw T."/>
            <person name="Bridges W. Jr."/>
            <person name="Frugoli J."/>
        </authorList>
    </citation>
    <scope>FUNCTION</scope>
</reference>
<reference key="7">
    <citation type="journal article" date="2017" name="Plant Physiol.">
        <title>ROOT DETERMINED NODULATION1 is required for M. truncatula CLE12, but not CLE13, peptide signaling through the SUNN receptor kinase.</title>
        <authorList>
            <person name="Kassaw T."/>
            <person name="Nowak S."/>
            <person name="Schnabel E."/>
            <person name="Frugoli J."/>
        </authorList>
    </citation>
    <scope>FUNCTION</scope>
    <scope>SUBCELLULAR LOCATION</scope>
    <scope>DISRUPTION PHENOTYPE</scope>
</reference>
<keyword id="KW-0328">Glycosyltransferase</keyword>
<keyword id="KW-0333">Golgi apparatus</keyword>
<keyword id="KW-0472">Membrane</keyword>
<keyword id="KW-1185">Reference proteome</keyword>
<keyword id="KW-0735">Signal-anchor</keyword>
<keyword id="KW-0808">Transferase</keyword>
<keyword id="KW-0812">Transmembrane</keyword>
<keyword id="KW-1133">Transmembrane helix</keyword>
<accession>E9KID2</accession>
<accession>G7K339</accession>
<organism>
    <name type="scientific">Medicago truncatula</name>
    <name type="common">Barrel medic</name>
    <name type="synonym">Medicago tribuloides</name>
    <dbReference type="NCBI Taxonomy" id="3880"/>
    <lineage>
        <taxon>Eukaryota</taxon>
        <taxon>Viridiplantae</taxon>
        <taxon>Streptophyta</taxon>
        <taxon>Embryophyta</taxon>
        <taxon>Tracheophyta</taxon>
        <taxon>Spermatophyta</taxon>
        <taxon>Magnoliopsida</taxon>
        <taxon>eudicotyledons</taxon>
        <taxon>Gunneridae</taxon>
        <taxon>Pentapetalae</taxon>
        <taxon>rosids</taxon>
        <taxon>fabids</taxon>
        <taxon>Fabales</taxon>
        <taxon>Fabaceae</taxon>
        <taxon>Papilionoideae</taxon>
        <taxon>50 kb inversion clade</taxon>
        <taxon>NPAAA clade</taxon>
        <taxon>Hologalegina</taxon>
        <taxon>IRL clade</taxon>
        <taxon>Trifolieae</taxon>
        <taxon>Medicago</taxon>
    </lineage>
</organism>
<evidence type="ECO:0000255" key="1"/>
<evidence type="ECO:0000269" key="2">
    <source>
    </source>
</evidence>
<evidence type="ECO:0000269" key="3">
    <source>
    </source>
</evidence>
<evidence type="ECO:0000269" key="4">
    <source>
    </source>
</evidence>
<evidence type="ECO:0000269" key="5">
    <source>
    </source>
</evidence>
<evidence type="ECO:0000303" key="6">
    <source>
    </source>
</evidence>
<evidence type="ECO:0000305" key="7"/>
<evidence type="ECO:0000305" key="8">
    <source>
    </source>
</evidence>
<evidence type="ECO:0000305" key="9">
    <source>
    </source>
</evidence>
<evidence type="ECO:0000312" key="10">
    <source>
        <dbReference type="EMBL" id="AET00211.1"/>
    </source>
</evidence>
<evidence type="ECO:0000312" key="11">
    <source>
        <dbReference type="EMBL" id="RHN57566.1"/>
    </source>
</evidence>
<dbReference type="EC" id="2.4.2.58" evidence="7"/>
<dbReference type="EMBL" id="GU580937">
    <property type="protein sequence ID" value="ADV35716.2"/>
    <property type="molecule type" value="mRNA"/>
</dbReference>
<dbReference type="EMBL" id="CM001221">
    <property type="protein sequence ID" value="AET00211.1"/>
    <property type="status" value="ALT_INIT"/>
    <property type="molecule type" value="Genomic_DNA"/>
</dbReference>
<dbReference type="EMBL" id="PSQE01000005">
    <property type="protein sequence ID" value="RHN57566.1"/>
    <property type="molecule type" value="Genomic_DNA"/>
</dbReference>
<dbReference type="RefSeq" id="XP_003617252.1">
    <property type="nucleotide sequence ID" value="XM_003617204.1"/>
</dbReference>
<dbReference type="SMR" id="E9KID2"/>
<dbReference type="STRING" id="3880.E9KID2"/>
<dbReference type="PaxDb" id="3880-AET00211"/>
<dbReference type="EnsemblPlants" id="rna33134">
    <property type="protein sequence ID" value="RHN57566.1"/>
    <property type="gene ID" value="gene33134"/>
</dbReference>
<dbReference type="GeneID" id="11432343"/>
<dbReference type="Gramene" id="rna33134">
    <property type="protein sequence ID" value="RHN57566.1"/>
    <property type="gene ID" value="gene33134"/>
</dbReference>
<dbReference type="KEGG" id="mtr:11432343"/>
<dbReference type="eggNOG" id="ENOG502QQNK">
    <property type="taxonomic scope" value="Eukaryota"/>
</dbReference>
<dbReference type="HOGENOM" id="CLU_065254_0_0_1"/>
<dbReference type="OrthoDB" id="10259977at2759"/>
<dbReference type="Proteomes" id="UP000002051">
    <property type="component" value="Chromosome 5"/>
</dbReference>
<dbReference type="Proteomes" id="UP000265566">
    <property type="component" value="Chromosome 5"/>
</dbReference>
<dbReference type="GO" id="GO:0000139">
    <property type="term" value="C:Golgi membrane"/>
    <property type="evidence" value="ECO:0007669"/>
    <property type="project" value="UniProtKB-SubCell"/>
</dbReference>
<dbReference type="GO" id="GO:1990585">
    <property type="term" value="F:hydroxyproline O-arabinosyltransferase activity"/>
    <property type="evidence" value="ECO:0007669"/>
    <property type="project" value="UniProtKB-EC"/>
</dbReference>
<dbReference type="InterPro" id="IPR056508">
    <property type="entry name" value="HPAT-like"/>
</dbReference>
<dbReference type="InterPro" id="IPR044845">
    <property type="entry name" value="HPAT/SRGT1-like"/>
</dbReference>
<dbReference type="PANTHER" id="PTHR31485:SF4">
    <property type="entry name" value="HYDROXYPROLINE O-ARABINOSYLTRANSFERASE RDN1"/>
    <property type="match status" value="1"/>
</dbReference>
<dbReference type="PANTHER" id="PTHR31485">
    <property type="entry name" value="PEPTIDYL SERINE ALPHA-GALACTOSYLTRANSFERASE"/>
    <property type="match status" value="1"/>
</dbReference>
<dbReference type="Pfam" id="PF23452">
    <property type="entry name" value="HPAT"/>
    <property type="match status" value="1"/>
</dbReference>
<protein>
    <recommendedName>
        <fullName evidence="7">Hydroxyproline O-arabinosyltransferase RDN1</fullName>
        <ecNumber evidence="7">2.4.2.58</ecNumber>
    </recommendedName>
    <alternativeName>
        <fullName evidence="6">Protein ROOT DETERMINED NODULATION 1</fullName>
        <shortName evidence="6">MtRDN1</shortName>
    </alternativeName>
</protein>